<keyword id="KW-1167">Clathrin- and caveolin-independent endocytosis of virus by host</keyword>
<keyword id="KW-1165">Clathrin-mediated endocytosis of virus by host</keyword>
<keyword id="KW-1015">Disulfide bond</keyword>
<keyword id="KW-1170">Fusion of virus membrane with host endosomal membrane</keyword>
<keyword id="KW-1168">Fusion of virus membrane with host membrane</keyword>
<keyword id="KW-0325">Glycoprotein</keyword>
<keyword id="KW-0348">Hemagglutinin</keyword>
<keyword id="KW-1032">Host cell membrane</keyword>
<keyword id="KW-1043">Host membrane</keyword>
<keyword id="KW-0945">Host-virus interaction</keyword>
<keyword id="KW-0449">Lipoprotein</keyword>
<keyword id="KW-0472">Membrane</keyword>
<keyword id="KW-0564">Palmitate</keyword>
<keyword id="KW-0732">Signal</keyword>
<keyword id="KW-0812">Transmembrane</keyword>
<keyword id="KW-1133">Transmembrane helix</keyword>
<keyword id="KW-1161">Viral attachment to host cell</keyword>
<keyword id="KW-0261">Viral envelope protein</keyword>
<keyword id="KW-1162">Viral penetration into host cytoplasm</keyword>
<keyword id="KW-0946">Virion</keyword>
<keyword id="KW-1164">Virus endocytosis by host</keyword>
<keyword id="KW-1160">Virus entry into host cell</keyword>
<protein>
    <recommendedName>
        <fullName evidence="1">Hemagglutinin</fullName>
    </recommendedName>
    <component>
        <recommendedName>
            <fullName evidence="1">Hemagglutinin HA1 chain</fullName>
        </recommendedName>
    </component>
    <component>
        <recommendedName>
            <fullName evidence="1">Hemagglutinin HA2 chain</fullName>
        </recommendedName>
    </component>
</protein>
<name>HEMA_I86A3</name>
<comment type="function">
    <text>Binds to sialic acid-containing receptors on the cell surface, bringing about the attachment of the virus particle to the cell. This attachment induces virion internalization of about two third of the virus particles through clathrin-dependent endocytosis and about one third through a clathrin- and caveolin-independent pathway. Plays a major role in the determination of host range restriction and virulence. Class I viral fusion protein. Responsible for penetration of the virus into the cell cytoplasm by mediating the fusion of the membrane of the endocytosed virus particle with the endosomal membrane. Low pH in endosomes induces an irreversible conformational change in HA2, releasing the fusion hydrophobic peptide. Several trimers are required to form a competent fusion pore.</text>
</comment>
<comment type="function">
    <text evidence="1">Binds to sialic acid-containing receptors on the cell surface, bringing about the attachment of the virus particle to the cell. This attachment induces virion internalization either through clathrin-dependent endocytosis or through clathrin- and caveolin-independent pathway. Plays a major role in the determination of host range restriction and virulence. Class I viral fusion protein. Responsible for penetration of the virus into the cell cytoplasm by mediating the fusion of the membrane of the endocytosed virus particle with the endosomal membrane. Low pH in endosomes induces an irreversible conformational change in HA2, releasing the fusion hydrophobic peptide. Several trimers are required to form a competent fusion pore.</text>
</comment>
<comment type="subunit">
    <text evidence="1">Homotrimer of disulfide-linked HA1-HA2.</text>
</comment>
<comment type="subcellular location">
    <subcellularLocation>
        <location evidence="1">Virion membrane</location>
        <topology evidence="1">Single-pass type I membrane protein</topology>
    </subcellularLocation>
    <subcellularLocation>
        <location evidence="1">Host apical cell membrane</location>
        <topology evidence="1">Single-pass type I membrane protein</topology>
    </subcellularLocation>
    <text evidence="1">Targeted to the apical plasma membrane in epithelial polarized cells through a signal present in the transmembrane domain. Associated with glycosphingolipid- and cholesterol-enriched detergent-resistant lipid rafts.</text>
</comment>
<comment type="PTM">
    <text evidence="1">Palmitoylated.</text>
</comment>
<comment type="PTM">
    <text evidence="1">In natural infection, inactive HA is matured into HA1 and HA2 outside the cell by one or more trypsin-like, arginine-specific endoprotease secreted by the bronchial epithelial cells. One identified protease that may be involved in this process is secreted in lungs by club cells.</text>
</comment>
<comment type="miscellaneous">
    <text>Major glycoprotein, comprises over 80% of the envelope proteins present in virus particle.</text>
</comment>
<comment type="miscellaneous">
    <text>The extent of infection into host organism is determined by HA. Influenza viruses bud from the apical surface of polarized epithelial cells (e.g. bronchial epithelial cells) into lumen of lungs and are therefore usually pneumotropic. The reason is that HA is cleaved by tryptase clara which is restricted to lungs. However, HAs of H5 and H7 pantropic avian viruses subtypes can be cleaved by furin and subtilisin-type enzymes, allowing the virus to grow in other organs than lungs.</text>
</comment>
<comment type="miscellaneous">
    <text evidence="2">The influenza A genome consist of 8 RNA segments. Genetic variation of hemagglutinin and/or neuraminidase genes results in the emergence of new influenza strains. The mechanism of variation can be the result of point mutations or the result of genetic reassortment between segments of two different strains.</text>
</comment>
<comment type="similarity">
    <text evidence="1">Belongs to the influenza viruses hemagglutinin family.</text>
</comment>
<feature type="signal peptide" evidence="1">
    <location>
        <begin position="1"/>
        <end position="16"/>
    </location>
</feature>
<feature type="chain" id="PRO_0000440523" description="Hemagglutinin" evidence="1">
    <location>
        <begin position="17"/>
        <end position="565"/>
    </location>
</feature>
<feature type="chain" id="PRO_0000039004" description="Hemagglutinin HA1 chain">
    <location>
        <begin position="17"/>
        <end position="343"/>
    </location>
</feature>
<feature type="chain" id="PRO_0000039005" description="Hemagglutinin HA2 chain" evidence="1">
    <location>
        <begin position="345"/>
        <end position="565"/>
    </location>
</feature>
<feature type="topological domain" description="Extracellular" evidence="1">
    <location>
        <begin position="17"/>
        <end position="529"/>
    </location>
</feature>
<feature type="transmembrane region" description="Helical" evidence="1">
    <location>
        <begin position="530"/>
        <end position="550"/>
    </location>
</feature>
<feature type="topological domain" description="Cytoplasmic" evidence="1">
    <location>
        <begin position="551"/>
        <end position="565"/>
    </location>
</feature>
<feature type="site" description="Cleavage; by host" evidence="1">
    <location>
        <begin position="344"/>
        <end position="345"/>
    </location>
</feature>
<feature type="lipid moiety-binding region" description="S-palmitoyl cysteine; by host" evidence="1">
    <location>
        <position position="554"/>
    </location>
</feature>
<feature type="lipid moiety-binding region" description="S-palmitoyl cysteine; by host" evidence="1">
    <location>
        <position position="561"/>
    </location>
</feature>
<feature type="lipid moiety-binding region" description="S-palmitoyl cysteine; by host" evidence="1">
    <location>
        <position position="564"/>
    </location>
</feature>
<feature type="glycosylation site" description="N-linked (GlcNAc...) asparagine; by host" evidence="1">
    <location>
        <position position="23"/>
    </location>
</feature>
<feature type="glycosylation site" description="N-linked (GlcNAc...) asparagine; by host" evidence="1">
    <location>
        <position position="37"/>
    </location>
</feature>
<feature type="glycosylation site" description="N-linked (GlcNAc...) asparagine; by host" evidence="1">
    <location>
        <position position="53"/>
    </location>
</feature>
<feature type="glycosylation site" description="N-linked (GlcNAc...) asparagine; by host" evidence="1">
    <location>
        <position position="68"/>
    </location>
</feature>
<feature type="glycosylation site" description="N-linked (GlcNAc...) asparagine; by host" evidence="1">
    <location>
        <position position="78"/>
    </location>
</feature>
<feature type="glycosylation site" description="N-linked (GlcNAc...) asparagine; by host" evidence="1">
    <location>
        <position position="180"/>
    </location>
</feature>
<feature type="glycosylation site" description="N-linked (GlcNAc...) asparagine; by host" evidence="1">
    <location>
        <position position="300"/>
    </location>
</feature>
<feature type="glycosylation site" description="N-linked (GlcNAc...) asparagine; by host" evidence="1">
    <location>
        <position position="498"/>
    </location>
</feature>
<feature type="disulfide bond" description="Interchain (between HA1 and HA2 chains)" evidence="1">
    <location>
        <begin position="29"/>
        <end position="481"/>
    </location>
</feature>
<feature type="disulfide bond" evidence="1">
    <location>
        <begin position="67"/>
        <end position="292"/>
    </location>
</feature>
<feature type="disulfide bond" evidence="1">
    <location>
        <begin position="79"/>
        <end position="91"/>
    </location>
</feature>
<feature type="disulfide bond" evidence="1">
    <location>
        <begin position="112"/>
        <end position="154"/>
    </location>
</feature>
<feature type="disulfide bond" evidence="1">
    <location>
        <begin position="296"/>
        <end position="320"/>
    </location>
</feature>
<feature type="disulfide bond" evidence="1">
    <location>
        <begin position="488"/>
        <end position="492"/>
    </location>
</feature>
<sequence length="565" mass="63688">MKTTIILILLTHWVYSQNPTSGNNTATLCLGHHAVANGTLVKTITDDQIEVTNATELVQSISIGKICNNSYRVLDGRNCTLIDAMLGDPHCDVFQYENWDLFIERSSAFSNCYPYDIPDYASLRSIVASSGTLEFTAEGFTWTGVTQNGRSGACKRGSADSFFSRLNWLTKSGNSYPTLNVTMPNNNNFDKLYIWGIHHPSSNNEQTKLYIQESGRVTVSTKRSQQTIIPNIGSRPWVRGQSGRISIYWTIVKPGDILMINSNGNLVAPRGYFKLRTGKSSVMRSDAPIDTCVSECITPNGSIPNDKPFQNVNKVTYGKCPKYIRQNTLKLATGMRNVPEKQIRGIFGAIAGFIENGWEGMVDGWYGFRYQNSEGTGQAGDLKSTQAAIDQINGKLNRVIERTNEKFHQIEKEFSEVEGRIQDLEKYVEDTKIDLWSYNAELLVALENQHTIDLTDAEMNKLFEKTRRQLRENAEDMGGGCFKIYHKCDNACIGSIRNGTYDHYIYRDEALNNRFQIKGVELKSGYKDWILWISFAISCFLICVVLLGFIMWACQKGNIRCNICI</sequence>
<dbReference type="EMBL" id="M24726">
    <property type="protein sequence ID" value="AAA43112.1"/>
    <property type="status" value="ALT_SEQ"/>
    <property type="molecule type" value="Genomic_RNA"/>
</dbReference>
<dbReference type="SMR" id="P17001"/>
<dbReference type="GlyCosmos" id="P17001">
    <property type="glycosylation" value="8 sites, No reported glycans"/>
</dbReference>
<dbReference type="GO" id="GO:0020002">
    <property type="term" value="C:host cell plasma membrane"/>
    <property type="evidence" value="ECO:0007669"/>
    <property type="project" value="UniProtKB-SubCell"/>
</dbReference>
<dbReference type="GO" id="GO:0016020">
    <property type="term" value="C:membrane"/>
    <property type="evidence" value="ECO:0007669"/>
    <property type="project" value="UniProtKB-UniRule"/>
</dbReference>
<dbReference type="GO" id="GO:0019031">
    <property type="term" value="C:viral envelope"/>
    <property type="evidence" value="ECO:0007669"/>
    <property type="project" value="UniProtKB-UniRule"/>
</dbReference>
<dbReference type="GO" id="GO:0055036">
    <property type="term" value="C:virion membrane"/>
    <property type="evidence" value="ECO:0007669"/>
    <property type="project" value="UniProtKB-SubCell"/>
</dbReference>
<dbReference type="GO" id="GO:0046789">
    <property type="term" value="F:host cell surface receptor binding"/>
    <property type="evidence" value="ECO:0007669"/>
    <property type="project" value="UniProtKB-UniRule"/>
</dbReference>
<dbReference type="GO" id="GO:0075512">
    <property type="term" value="P:clathrin-dependent endocytosis of virus by host cell"/>
    <property type="evidence" value="ECO:0007669"/>
    <property type="project" value="UniProtKB-UniRule"/>
</dbReference>
<dbReference type="GO" id="GO:0039654">
    <property type="term" value="P:fusion of virus membrane with host endosome membrane"/>
    <property type="evidence" value="ECO:0007669"/>
    <property type="project" value="UniProtKB-UniRule"/>
</dbReference>
<dbReference type="GO" id="GO:0019064">
    <property type="term" value="P:fusion of virus membrane with host plasma membrane"/>
    <property type="evidence" value="ECO:0007669"/>
    <property type="project" value="InterPro"/>
</dbReference>
<dbReference type="GO" id="GO:0046761">
    <property type="term" value="P:viral budding from plasma membrane"/>
    <property type="evidence" value="ECO:0007669"/>
    <property type="project" value="UniProtKB-UniRule"/>
</dbReference>
<dbReference type="GO" id="GO:0019062">
    <property type="term" value="P:virion attachment to host cell"/>
    <property type="evidence" value="ECO:0007669"/>
    <property type="project" value="UniProtKB-KW"/>
</dbReference>
<dbReference type="FunFam" id="3.90.20.10:FF:000001">
    <property type="entry name" value="Hemagglutinin"/>
    <property type="match status" value="1"/>
</dbReference>
<dbReference type="FunFam" id="3.90.209.20:FF:000001">
    <property type="entry name" value="Hemagglutinin"/>
    <property type="match status" value="1"/>
</dbReference>
<dbReference type="Gene3D" id="3.90.20.10">
    <property type="match status" value="1"/>
</dbReference>
<dbReference type="Gene3D" id="3.90.209.20">
    <property type="match status" value="1"/>
</dbReference>
<dbReference type="HAMAP" id="MF_04072">
    <property type="entry name" value="INFV_HEMA"/>
    <property type="match status" value="1"/>
</dbReference>
<dbReference type="InterPro" id="IPR008980">
    <property type="entry name" value="Capsid_hemagglutn"/>
</dbReference>
<dbReference type="InterPro" id="IPR013828">
    <property type="entry name" value="Hemagglutn_HA1_a/b_dom_sf"/>
</dbReference>
<dbReference type="InterPro" id="IPR000149">
    <property type="entry name" value="Hemagglutn_influenz_A"/>
</dbReference>
<dbReference type="InterPro" id="IPR001364">
    <property type="entry name" value="Hemagglutn_influenz_A/B"/>
</dbReference>
<dbReference type="Pfam" id="PF00509">
    <property type="entry name" value="Hemagglutinin"/>
    <property type="match status" value="1"/>
</dbReference>
<dbReference type="PRINTS" id="PR00330">
    <property type="entry name" value="HEMAGGLUTN1"/>
</dbReference>
<dbReference type="PRINTS" id="PR00329">
    <property type="entry name" value="HEMAGGLUTN12"/>
</dbReference>
<dbReference type="SUPFAM" id="SSF58064">
    <property type="entry name" value="Influenza hemagglutinin (stalk)"/>
    <property type="match status" value="1"/>
</dbReference>
<dbReference type="SUPFAM" id="SSF49818">
    <property type="entry name" value="Viral protein domain"/>
    <property type="match status" value="1"/>
</dbReference>
<proteinExistence type="inferred from homology"/>
<accession>P17001</accession>
<accession>Q84004</accession>
<accession>Q84005</accession>
<evidence type="ECO:0000255" key="1">
    <source>
        <dbReference type="HAMAP-Rule" id="MF_04072"/>
    </source>
</evidence>
<evidence type="ECO:0000305" key="2"/>
<organism>
    <name type="scientific">Influenza A virus (strain A/Equine/Tennessee/5/1986 H3N8)</name>
    <dbReference type="NCBI Taxonomy" id="380339"/>
    <lineage>
        <taxon>Viruses</taxon>
        <taxon>Riboviria</taxon>
        <taxon>Orthornavirae</taxon>
        <taxon>Negarnaviricota</taxon>
        <taxon>Polyploviricotina</taxon>
        <taxon>Insthoviricetes</taxon>
        <taxon>Articulavirales</taxon>
        <taxon>Orthomyxoviridae</taxon>
        <taxon>Alphainfluenzavirus</taxon>
        <taxon>Alphainfluenzavirus influenzae</taxon>
        <taxon>Influenza A virus</taxon>
    </lineage>
</organism>
<organismHost>
    <name type="scientific">Aves</name>
    <dbReference type="NCBI Taxonomy" id="8782"/>
</organismHost>
<organismHost>
    <name type="scientific">Equus caballus</name>
    <name type="common">Horse</name>
    <dbReference type="NCBI Taxonomy" id="9796"/>
</organismHost>
<gene>
    <name evidence="1" type="primary">HA</name>
</gene>
<reference key="1">
    <citation type="journal article" date="1989" name="Virology">
        <title>Evolution of the hemagglutinin of equine H3 influenza viruses.</title>
        <authorList>
            <person name="Kawaoka Y."/>
            <person name="Bean W.J."/>
            <person name="Webster R.G."/>
        </authorList>
    </citation>
    <scope>NUCLEOTIDE SEQUENCE [GENOMIC RNA]</scope>
</reference>